<protein>
    <recommendedName>
        <fullName>Autophagy-related protein 27</fullName>
    </recommendedName>
</protein>
<accession>Q6CBS9</accession>
<keyword id="KW-0072">Autophagy</keyword>
<keyword id="KW-0968">Cytoplasmic vesicle</keyword>
<keyword id="KW-1015">Disulfide bond</keyword>
<keyword id="KW-0333">Golgi apparatus</keyword>
<keyword id="KW-0472">Membrane</keyword>
<keyword id="KW-0496">Mitochondrion</keyword>
<keyword id="KW-0653">Protein transport</keyword>
<keyword id="KW-1185">Reference proteome</keyword>
<keyword id="KW-0732">Signal</keyword>
<keyword id="KW-0812">Transmembrane</keyword>
<keyword id="KW-1133">Transmembrane helix</keyword>
<keyword id="KW-0813">Transport</keyword>
<reference key="1">
    <citation type="journal article" date="2004" name="Nature">
        <title>Genome evolution in yeasts.</title>
        <authorList>
            <person name="Dujon B."/>
            <person name="Sherman D."/>
            <person name="Fischer G."/>
            <person name="Durrens P."/>
            <person name="Casaregola S."/>
            <person name="Lafontaine I."/>
            <person name="de Montigny J."/>
            <person name="Marck C."/>
            <person name="Neuveglise C."/>
            <person name="Talla E."/>
            <person name="Goffard N."/>
            <person name="Frangeul L."/>
            <person name="Aigle M."/>
            <person name="Anthouard V."/>
            <person name="Babour A."/>
            <person name="Barbe V."/>
            <person name="Barnay S."/>
            <person name="Blanchin S."/>
            <person name="Beckerich J.-M."/>
            <person name="Beyne E."/>
            <person name="Bleykasten C."/>
            <person name="Boisrame A."/>
            <person name="Boyer J."/>
            <person name="Cattolico L."/>
            <person name="Confanioleri F."/>
            <person name="de Daruvar A."/>
            <person name="Despons L."/>
            <person name="Fabre E."/>
            <person name="Fairhead C."/>
            <person name="Ferry-Dumazet H."/>
            <person name="Groppi A."/>
            <person name="Hantraye F."/>
            <person name="Hennequin C."/>
            <person name="Jauniaux N."/>
            <person name="Joyet P."/>
            <person name="Kachouri R."/>
            <person name="Kerrest A."/>
            <person name="Koszul R."/>
            <person name="Lemaire M."/>
            <person name="Lesur I."/>
            <person name="Ma L."/>
            <person name="Muller H."/>
            <person name="Nicaud J.-M."/>
            <person name="Nikolski M."/>
            <person name="Oztas S."/>
            <person name="Ozier-Kalogeropoulos O."/>
            <person name="Pellenz S."/>
            <person name="Potier S."/>
            <person name="Richard G.-F."/>
            <person name="Straub M.-L."/>
            <person name="Suleau A."/>
            <person name="Swennen D."/>
            <person name="Tekaia F."/>
            <person name="Wesolowski-Louvel M."/>
            <person name="Westhof E."/>
            <person name="Wirth B."/>
            <person name="Zeniou-Meyer M."/>
            <person name="Zivanovic Y."/>
            <person name="Bolotin-Fukuhara M."/>
            <person name="Thierry A."/>
            <person name="Bouchier C."/>
            <person name="Caudron B."/>
            <person name="Scarpelli C."/>
            <person name="Gaillardin C."/>
            <person name="Weissenbach J."/>
            <person name="Wincker P."/>
            <person name="Souciet J.-L."/>
        </authorList>
    </citation>
    <scope>NUCLEOTIDE SEQUENCE [LARGE SCALE GENOMIC DNA]</scope>
    <source>
        <strain>CLIB 122 / E 150</strain>
    </source>
</reference>
<organism>
    <name type="scientific">Yarrowia lipolytica (strain CLIB 122 / E 150)</name>
    <name type="common">Yeast</name>
    <name type="synonym">Candida lipolytica</name>
    <dbReference type="NCBI Taxonomy" id="284591"/>
    <lineage>
        <taxon>Eukaryota</taxon>
        <taxon>Fungi</taxon>
        <taxon>Dikarya</taxon>
        <taxon>Ascomycota</taxon>
        <taxon>Saccharomycotina</taxon>
        <taxon>Dipodascomycetes</taxon>
        <taxon>Dipodascales</taxon>
        <taxon>Dipodascales incertae sedis</taxon>
        <taxon>Yarrowia</taxon>
    </lineage>
</organism>
<comment type="function">
    <text evidence="1">Effector of VPS34 phosphatidylinositol 3-phosphate kinase signaling. Regulates the cytoplasm to vacuole transport (Cvt) vesicle formation. Plays a role in ATG protein retrieval from the pre-autophagosomal structure (PAS) and is especially required for autophagy-dependent cycling of ATG9 (By similarity).</text>
</comment>
<comment type="subcellular location">
    <subcellularLocation>
        <location evidence="1">Cytoplasmic vesicle membrane</location>
        <topology evidence="1">Single-pass type I membrane protein</topology>
    </subcellularLocation>
    <subcellularLocation>
        <location evidence="1">Golgi apparatus membrane</location>
        <topology evidence="1">Single-pass type I membrane protein</topology>
    </subcellularLocation>
    <subcellularLocation>
        <location evidence="1">Mitochondrion membrane</location>
        <topology evidence="1">Single-pass membrane protein</topology>
    </subcellularLocation>
    <subcellularLocation>
        <location evidence="1">Preautophagosomal structure membrane</location>
        <topology evidence="1">Single-pass type I membrane protein</topology>
    </subcellularLocation>
    <text evidence="1">Cycles among the pre-autophagosomal structure (PAS), mitochondria and Golgi.</text>
</comment>
<comment type="similarity">
    <text evidence="5">Belongs to the ATG27 family.</text>
</comment>
<evidence type="ECO:0000250" key="1"/>
<evidence type="ECO:0000255" key="2"/>
<evidence type="ECO:0000255" key="3">
    <source>
        <dbReference type="PROSITE-ProRule" id="PRU01262"/>
    </source>
</evidence>
<evidence type="ECO:0000256" key="4">
    <source>
        <dbReference type="SAM" id="MobiDB-lite"/>
    </source>
</evidence>
<evidence type="ECO:0000305" key="5"/>
<sequence>MKSAIIGYMAVAVAAASCQFTVDSKNYDLSAISGPKSVEYTIETPPSKRKMEFVLDPCASLKQDKKKPADEQCPDNTIVCGLGYILLPKEKDFVLSEVMPFGNGPAPQYQPLKTGPEGTEGLSTSYGNPWGSEKLDIDVNYICSDKEEGPKLENVGLGLNNYYEINWKTPAACINDGSKPKQPVKEPGKTPNDGDDASNGNPSWGWFTWLFIIIVLGVAVYIIGNAWINYDRYGNAGVDLLPHADSLRDVPYLIRDLIAKVVGTFTGSSRTGYSAV</sequence>
<dbReference type="EMBL" id="CR382129">
    <property type="protein sequence ID" value="CAG82196.1"/>
    <property type="molecule type" value="Genomic_DNA"/>
</dbReference>
<dbReference type="RefSeq" id="XP_501883.1">
    <property type="nucleotide sequence ID" value="XM_501883.1"/>
</dbReference>
<dbReference type="FunCoup" id="Q6CBS9">
    <property type="interactions" value="77"/>
</dbReference>
<dbReference type="STRING" id="284591.Q6CBS9"/>
<dbReference type="EnsemblFungi" id="CAG82196">
    <property type="protein sequence ID" value="CAG82196"/>
    <property type="gene ID" value="YALI0_C15851g"/>
</dbReference>
<dbReference type="KEGG" id="yli:2909440"/>
<dbReference type="VEuPathDB" id="FungiDB:YALI0_C15851g"/>
<dbReference type="HOGENOM" id="CLU_047751_0_0_1"/>
<dbReference type="InParanoid" id="Q6CBS9"/>
<dbReference type="OMA" id="GSSHWGF"/>
<dbReference type="OrthoDB" id="107360at4891"/>
<dbReference type="Proteomes" id="UP000001300">
    <property type="component" value="Chromosome C"/>
</dbReference>
<dbReference type="GO" id="GO:0030659">
    <property type="term" value="C:cytoplasmic vesicle membrane"/>
    <property type="evidence" value="ECO:0007669"/>
    <property type="project" value="UniProtKB-SubCell"/>
</dbReference>
<dbReference type="GO" id="GO:0000139">
    <property type="term" value="C:Golgi membrane"/>
    <property type="evidence" value="ECO:0007669"/>
    <property type="project" value="UniProtKB-SubCell"/>
</dbReference>
<dbReference type="GO" id="GO:0031966">
    <property type="term" value="C:mitochondrial membrane"/>
    <property type="evidence" value="ECO:0007669"/>
    <property type="project" value="UniProtKB-SubCell"/>
</dbReference>
<dbReference type="GO" id="GO:0034045">
    <property type="term" value="C:phagophore assembly site membrane"/>
    <property type="evidence" value="ECO:0007669"/>
    <property type="project" value="UniProtKB-SubCell"/>
</dbReference>
<dbReference type="GO" id="GO:0006914">
    <property type="term" value="P:autophagy"/>
    <property type="evidence" value="ECO:0007669"/>
    <property type="project" value="UniProtKB-KW"/>
</dbReference>
<dbReference type="GO" id="GO:0015031">
    <property type="term" value="P:protein transport"/>
    <property type="evidence" value="ECO:0007669"/>
    <property type="project" value="UniProtKB-KW"/>
</dbReference>
<dbReference type="Gene3D" id="2.70.130.10">
    <property type="entry name" value="Mannose-6-phosphate receptor binding domain"/>
    <property type="match status" value="1"/>
</dbReference>
<dbReference type="InterPro" id="IPR018939">
    <property type="entry name" value="Autophagy-rel_prot_27"/>
</dbReference>
<dbReference type="InterPro" id="IPR009011">
    <property type="entry name" value="Man6P_isomerase_rcpt-bd_dom_sf"/>
</dbReference>
<dbReference type="InterPro" id="IPR044865">
    <property type="entry name" value="MRH_dom"/>
</dbReference>
<dbReference type="PANTHER" id="PTHR15071:SF13">
    <property type="entry name" value="AUTOPHAGY-RELATED PROTEIN 27"/>
    <property type="match status" value="1"/>
</dbReference>
<dbReference type="PANTHER" id="PTHR15071">
    <property type="entry name" value="MANNOSE-6-PHOSPHATE RECEPTOR FAMILY MEMBER"/>
    <property type="match status" value="1"/>
</dbReference>
<dbReference type="Pfam" id="PF09451">
    <property type="entry name" value="ATG27"/>
    <property type="match status" value="1"/>
</dbReference>
<dbReference type="SUPFAM" id="SSF50911">
    <property type="entry name" value="Mannose 6-phosphate receptor domain"/>
    <property type="match status" value="1"/>
</dbReference>
<dbReference type="PROSITE" id="PS51914">
    <property type="entry name" value="MRH"/>
    <property type="match status" value="1"/>
</dbReference>
<feature type="signal peptide" evidence="2">
    <location>
        <begin position="1"/>
        <end position="15"/>
    </location>
</feature>
<feature type="chain" id="PRO_0000001779" description="Autophagy-related protein 27" evidence="2">
    <location>
        <begin position="16"/>
        <end position="276"/>
    </location>
</feature>
<feature type="topological domain" description="Lumenal" evidence="2">
    <location>
        <begin position="16"/>
        <end position="203"/>
    </location>
</feature>
<feature type="transmembrane region" description="Helical" evidence="2">
    <location>
        <begin position="204"/>
        <end position="224"/>
    </location>
</feature>
<feature type="topological domain" description="Cytoplasmic" evidence="2">
    <location>
        <begin position="225"/>
        <end position="276"/>
    </location>
</feature>
<feature type="domain" description="MRH" evidence="3">
    <location>
        <begin position="16"/>
        <end position="175"/>
    </location>
</feature>
<feature type="region of interest" description="Disordered" evidence="4">
    <location>
        <begin position="174"/>
        <end position="198"/>
    </location>
</feature>
<feature type="disulfide bond" evidence="3">
    <location>
        <begin position="18"/>
        <end position="58"/>
    </location>
</feature>
<feature type="disulfide bond" evidence="3">
    <location>
        <begin position="73"/>
        <end position="80"/>
    </location>
</feature>
<feature type="disulfide bond" evidence="3">
    <location>
        <begin position="143"/>
        <end position="173"/>
    </location>
</feature>
<gene>
    <name type="primary">ATG27</name>
    <name type="ordered locus">YALI0C15851g</name>
</gene>
<name>ATG27_YARLI</name>
<proteinExistence type="inferred from homology"/>